<dbReference type="EC" id="2.4.1.11" evidence="3"/>
<dbReference type="EMBL" id="CR859418">
    <property type="protein sequence ID" value="CAH91590.1"/>
    <property type="molecule type" value="mRNA"/>
</dbReference>
<dbReference type="RefSeq" id="NP_001125937.1">
    <property type="nucleotide sequence ID" value="NM_001132465.1"/>
</dbReference>
<dbReference type="SMR" id="Q5R9H0"/>
<dbReference type="STRING" id="9601.ENSPPYP00000011436"/>
<dbReference type="CAZy" id="GT3">
    <property type="family name" value="Glycosyltransferase Family 3"/>
</dbReference>
<dbReference type="GeneID" id="100172871"/>
<dbReference type="KEGG" id="pon:100172871"/>
<dbReference type="CTD" id="2997"/>
<dbReference type="eggNOG" id="KOG3742">
    <property type="taxonomic scope" value="Eukaryota"/>
</dbReference>
<dbReference type="InParanoid" id="Q5R9H0"/>
<dbReference type="OrthoDB" id="6335297at2759"/>
<dbReference type="UniPathway" id="UPA00164"/>
<dbReference type="Proteomes" id="UP000001595">
    <property type="component" value="Unplaced"/>
</dbReference>
<dbReference type="GO" id="GO:0005737">
    <property type="term" value="C:cytoplasm"/>
    <property type="evidence" value="ECO:0007669"/>
    <property type="project" value="TreeGrafter"/>
</dbReference>
<dbReference type="GO" id="GO:0004373">
    <property type="term" value="F:alpha-1,4-glucan glucosyltransferase (UDP-glucose donor) activity"/>
    <property type="evidence" value="ECO:0000250"/>
    <property type="project" value="UniProtKB"/>
</dbReference>
<dbReference type="GO" id="GO:0005978">
    <property type="term" value="P:glycogen biosynthetic process"/>
    <property type="evidence" value="ECO:0000250"/>
    <property type="project" value="UniProtKB"/>
</dbReference>
<dbReference type="CDD" id="cd03793">
    <property type="entry name" value="GT3_GSY2-like"/>
    <property type="match status" value="1"/>
</dbReference>
<dbReference type="FunFam" id="3.40.50.2000:FF:000014">
    <property type="entry name" value="Glycogen [starch] synthase"/>
    <property type="match status" value="1"/>
</dbReference>
<dbReference type="FunFam" id="3.40.50.2000:FF:000028">
    <property type="entry name" value="Glycogen [starch] synthase"/>
    <property type="match status" value="1"/>
</dbReference>
<dbReference type="Gene3D" id="3.40.50.2000">
    <property type="entry name" value="Glycogen Phosphorylase B"/>
    <property type="match status" value="2"/>
</dbReference>
<dbReference type="InterPro" id="IPR008631">
    <property type="entry name" value="Glycogen_synth"/>
</dbReference>
<dbReference type="PANTHER" id="PTHR10176:SF2">
    <property type="entry name" value="GLYCOGEN [STARCH] SYNTHASE, MUSCLE"/>
    <property type="match status" value="1"/>
</dbReference>
<dbReference type="PANTHER" id="PTHR10176">
    <property type="entry name" value="GLYCOGEN SYNTHASE"/>
    <property type="match status" value="1"/>
</dbReference>
<dbReference type="Pfam" id="PF05693">
    <property type="entry name" value="Glycogen_syn"/>
    <property type="match status" value="1"/>
</dbReference>
<dbReference type="SUPFAM" id="SSF53756">
    <property type="entry name" value="UDP-Glycosyltransferase/glycogen phosphorylase"/>
    <property type="match status" value="2"/>
</dbReference>
<feature type="chain" id="PRO_0000366919" description="Glycogen [starch] synthase, muscle">
    <location>
        <begin position="1"/>
        <end position="737"/>
    </location>
</feature>
<feature type="region of interest" description="Disordered" evidence="7">
    <location>
        <begin position="634"/>
        <end position="737"/>
    </location>
</feature>
<feature type="compositionally biased region" description="Acidic residues" evidence="7">
    <location>
        <begin position="658"/>
        <end position="681"/>
    </location>
</feature>
<feature type="compositionally biased region" description="Basic and acidic residues" evidence="7">
    <location>
        <begin position="682"/>
        <end position="695"/>
    </location>
</feature>
<feature type="compositionally biased region" description="Polar residues" evidence="7">
    <location>
        <begin position="698"/>
        <end position="714"/>
    </location>
</feature>
<feature type="compositionally biased region" description="Low complexity" evidence="7">
    <location>
        <begin position="715"/>
        <end position="737"/>
    </location>
</feature>
<feature type="binding site" evidence="3">
    <location>
        <position position="39"/>
    </location>
    <ligand>
        <name>UDP</name>
        <dbReference type="ChEBI" id="CHEBI:58223"/>
    </ligand>
</feature>
<feature type="binding site" evidence="3">
    <location>
        <position position="205"/>
    </location>
    <ligand>
        <name>UDP-alpha-D-glucose</name>
        <dbReference type="ChEBI" id="CHEBI:58885"/>
    </ligand>
</feature>
<feature type="binding site" evidence="3">
    <location>
        <position position="211"/>
    </location>
    <ligand>
        <name>UDP-alpha-D-glucose</name>
        <dbReference type="ChEBI" id="CHEBI:58885"/>
    </ligand>
</feature>
<feature type="binding site" description="in other chain" evidence="3">
    <location>
        <position position="291"/>
    </location>
    <ligand>
        <name>alpha-D-glucose 6-phosphate</name>
        <dbReference type="ChEBI" id="CHEBI:58225"/>
        <note>allosteric activator; ligand shared between two neighboring subunits</note>
    </ligand>
</feature>
<feature type="binding site" description="in other chain" evidence="3">
    <location>
        <position position="292"/>
    </location>
    <ligand>
        <name>alpha-D-glucose 6-phosphate</name>
        <dbReference type="ChEBI" id="CHEBI:58225"/>
        <note>allosteric activator; ligand shared between two neighboring subunits</note>
    </ligand>
</feature>
<feature type="binding site" evidence="3">
    <location>
        <position position="294"/>
    </location>
    <ligand>
        <name>alpha-D-glucose 6-phosphate</name>
        <dbReference type="ChEBI" id="CHEBI:58225"/>
        <note>allosteric activator; ligand shared between two neighboring subunits</note>
    </ligand>
</feature>
<feature type="binding site" evidence="3">
    <location>
        <position position="297"/>
    </location>
    <ligand>
        <name>alpha-D-glucose 6-phosphate</name>
        <dbReference type="ChEBI" id="CHEBI:58225"/>
        <note>allosteric activator; ligand shared between two neighboring subunits</note>
    </ligand>
</feature>
<feature type="binding site" evidence="3">
    <location>
        <position position="301"/>
    </location>
    <ligand>
        <name>alpha-D-glucose 6-phosphate</name>
        <dbReference type="ChEBI" id="CHEBI:58225"/>
        <note>allosteric activator; ligand shared between two neighboring subunits</note>
    </ligand>
</feature>
<feature type="binding site" evidence="3">
    <location>
        <position position="331"/>
    </location>
    <ligand>
        <name>UDP</name>
        <dbReference type="ChEBI" id="CHEBI:58223"/>
    </ligand>
</feature>
<feature type="binding site" evidence="3">
    <location>
        <position position="331"/>
    </location>
    <ligand>
        <name>UDP-alpha-D-glucose</name>
        <dbReference type="ChEBI" id="CHEBI:58885"/>
    </ligand>
</feature>
<feature type="binding site" evidence="3">
    <location>
        <position position="501"/>
    </location>
    <ligand>
        <name>alpha-D-glucose 6-phosphate</name>
        <dbReference type="ChEBI" id="CHEBI:58225"/>
        <note>allosteric activator; ligand shared between two neighboring subunits</note>
    </ligand>
</feature>
<feature type="binding site" evidence="3">
    <location>
        <position position="510"/>
    </location>
    <ligand>
        <name>UDP-alpha-D-glucose</name>
        <dbReference type="ChEBI" id="CHEBI:58885"/>
    </ligand>
</feature>
<feature type="binding site" evidence="3">
    <location>
        <position position="512"/>
    </location>
    <ligand>
        <name>UDP-alpha-D-glucose</name>
        <dbReference type="ChEBI" id="CHEBI:58885"/>
    </ligand>
</feature>
<feature type="binding site" evidence="3">
    <location>
        <position position="513"/>
    </location>
    <ligand>
        <name>UDP-alpha-D-glucose</name>
        <dbReference type="ChEBI" id="CHEBI:58885"/>
    </ligand>
</feature>
<feature type="binding site" evidence="3">
    <location>
        <position position="515"/>
    </location>
    <ligand>
        <name>UDP</name>
        <dbReference type="ChEBI" id="CHEBI:58223"/>
    </ligand>
</feature>
<feature type="binding site" evidence="3">
    <location>
        <position position="582"/>
    </location>
    <ligand>
        <name>alpha-D-glucose 6-phosphate</name>
        <dbReference type="ChEBI" id="CHEBI:58225"/>
        <note>allosteric activator; ligand shared between two neighboring subunits</note>
    </ligand>
</feature>
<feature type="binding site" evidence="3">
    <location>
        <position position="586"/>
    </location>
    <ligand>
        <name>alpha-D-glucose 6-phosphate</name>
        <dbReference type="ChEBI" id="CHEBI:58225"/>
        <note>allosteric activator; ligand shared between two neighboring subunits</note>
    </ligand>
</feature>
<feature type="modified residue" description="Phosphoserine; by AMPK and PKA" evidence="6">
    <location>
        <position position="8"/>
    </location>
</feature>
<feature type="modified residue" description="Phosphoserine" evidence="4">
    <location>
        <position position="11"/>
    </location>
</feature>
<feature type="modified residue" description="Phosphoserine" evidence="3">
    <location>
        <position position="412"/>
    </location>
</feature>
<feature type="modified residue" description="Phosphoserine; by DYRK2, GSK3-alpha, GSK3-beta and PASK" evidence="4">
    <location>
        <position position="641"/>
    </location>
</feature>
<feature type="modified residue" description="Phosphoserine; by GSK3-alpha and GSK3-beta" evidence="4">
    <location>
        <position position="645"/>
    </location>
</feature>
<feature type="modified residue" description="Phosphoserine; by GSK3-alpha and GSK3-beta" evidence="4">
    <location>
        <position position="649"/>
    </location>
</feature>
<feature type="modified residue" description="Phosphoserine" evidence="2">
    <location>
        <position position="652"/>
    </location>
</feature>
<feature type="modified residue" description="Phosphoserine; by GSK3-alpha and GSK3-beta" evidence="4">
    <location>
        <position position="653"/>
    </location>
</feature>
<feature type="modified residue" description="Phosphoserine; by CK2" evidence="4">
    <location>
        <position position="657"/>
    </location>
</feature>
<feature type="modified residue" description="Phosphoserine" evidence="4">
    <location>
        <position position="698"/>
    </location>
</feature>
<feature type="modified residue" description="Phosphothreonine" evidence="3">
    <location>
        <position position="700"/>
    </location>
</feature>
<feature type="modified residue" description="Phosphoserine" evidence="3">
    <location>
        <position position="710"/>
    </location>
</feature>
<feature type="modified residue" description="Phosphothreonine" evidence="6">
    <location>
        <position position="721"/>
    </location>
</feature>
<feature type="modified residue" description="Phosphoserine" evidence="3">
    <location>
        <position position="727"/>
    </location>
</feature>
<feature type="modified residue" description="Phosphoserine" evidence="3">
    <location>
        <position position="731"/>
    </location>
</feature>
<evidence type="ECO:0000250" key="1"/>
<evidence type="ECO:0000250" key="2">
    <source>
        <dbReference type="UniProtKB" id="A2RRU1"/>
    </source>
</evidence>
<evidence type="ECO:0000250" key="3">
    <source>
        <dbReference type="UniProtKB" id="P13807"/>
    </source>
</evidence>
<evidence type="ECO:0000250" key="4">
    <source>
        <dbReference type="UniProtKB" id="P13834"/>
    </source>
</evidence>
<evidence type="ECO:0000250" key="5">
    <source>
        <dbReference type="UniProtKB" id="P54840"/>
    </source>
</evidence>
<evidence type="ECO:0000250" key="6">
    <source>
        <dbReference type="UniProtKB" id="Q9Z1E4"/>
    </source>
</evidence>
<evidence type="ECO:0000256" key="7">
    <source>
        <dbReference type="SAM" id="MobiDB-lite"/>
    </source>
</evidence>
<evidence type="ECO:0000305" key="8"/>
<keyword id="KW-0021">Allosteric enzyme</keyword>
<keyword id="KW-0320">Glycogen biosynthesis</keyword>
<keyword id="KW-0328">Glycosyltransferase</keyword>
<keyword id="KW-0597">Phosphoprotein</keyword>
<keyword id="KW-1185">Reference proteome</keyword>
<keyword id="KW-0808">Transferase</keyword>
<comment type="function">
    <text evidence="3">Glycogen synthase participates in the glycogen biosynthetic process along with glycogenin and glycogen branching enzyme. Extends the primer composed of a few glucose units formed by glycogenin by adding new glucose units to it. In this context, glycogen synthase transfers the glycosyl residue from UDP-Glc to the non-reducing end of alpha-1,4-glucan.</text>
</comment>
<comment type="catalytic activity">
    <reaction evidence="3">
        <text>[(1-&gt;4)-alpha-D-glucosyl](n) + UDP-alpha-D-glucose = [(1-&gt;4)-alpha-D-glucosyl](n+1) + UDP + H(+)</text>
        <dbReference type="Rhea" id="RHEA:18549"/>
        <dbReference type="Rhea" id="RHEA-COMP:9584"/>
        <dbReference type="Rhea" id="RHEA-COMP:9587"/>
        <dbReference type="ChEBI" id="CHEBI:15378"/>
        <dbReference type="ChEBI" id="CHEBI:15444"/>
        <dbReference type="ChEBI" id="CHEBI:58223"/>
        <dbReference type="ChEBI" id="CHEBI:58885"/>
        <dbReference type="EC" id="2.4.1.11"/>
    </reaction>
    <physiologicalReaction direction="left-to-right" evidence="3">
        <dbReference type="Rhea" id="RHEA:18550"/>
    </physiologicalReaction>
</comment>
<comment type="activity regulation">
    <text evidence="4 5">Allosteric activation by glucose-6-phosphate. Phosphorylation reduces the activity towards UDP-glucose. When in the non-phosphorylated state, glycogen synthase does not require glucose-6-phosphate as an allosteric activator; when phosphorylated it does (By similarity).</text>
</comment>
<comment type="pathway">
    <text evidence="3">Glycan biosynthesis; glycogen biosynthesis.</text>
</comment>
<comment type="subunit">
    <text evidence="3">Part of the GYS1-GYG1 complex, a heterooctamer composed of a tetramer of GYS1 and 2 dimers of GYG1, where each GYS1 protomer binds to one GYG1 subunit (via GYG1 C-terminus); the GYS1 tetramer may dissociate from GYG1 dimers to continue glycogen polymerization on its own.</text>
</comment>
<comment type="PTM">
    <text evidence="1">Phosphorylation at Ser-8 by AMPK inactivates the enzyme activity. Primed phosphorylation at Ser-657 (site 5) by CSNK2A1 and CSNK2A2 is required for inhibitory phosphorylation at Ser-641 (site 3a), Ser-645 (site 3b), Ser-649 (site 3c) and Ser-653 (site 4) by GSK3A an GSK3B. Phosphorylated at Ser-641 by PASK, leading to inactivation; phosphorylation by PASK is inhibited by glycogen. Phosphorylated at Ser-641 by DYRK2, leading to inactivation. Dephosphorylation at Ser-641 and Ser-645 by PP1 activates the enzyme (By similarity).</text>
</comment>
<comment type="similarity">
    <text evidence="8">Belongs to the glycosyltransferase 3 family.</text>
</comment>
<proteinExistence type="evidence at transcript level"/>
<sequence>MPLNRTLSMSSLPGLEDWEDEFDLENAVLFEVAWEVANKVGGIYTVLQTKAKVTGDEWGANYFLVGPYTEQGVRTQVELLEAPTPALKRTLDSMNSKGCKVYFGRWLIEGGPLVVLLDVGASAWALERWKGELWDTCNIGVPWYDREANDAVLFGFLTTWFLGEFLAQSEEKLHVVAHFHEWLAGIGLCLCRARRLPVATIFTTHATLLGRYLCAGAVDFYNNLENFNVDKEAGERQIYHRYCMERAAAHCAHVFTTVSQITAIEAQYLLKRKPDIVTPNGLNVKKFSAMHEFQNLHAQSKARIQEFVRGHFYGHLDFNLDKTLYFFIAGRYEFSNKGADVFLEALARLNYLLRVNGSEQTVVAFFIMPARTNNFNVETLKGQAVRKQLWDTANTVKEKFGRKLYESLLVGSLPDMNKMLDKEDFTMMKRAIFATQRQSFPPVCTHNMLDDSSDPILTTIRRIGLFNSSADRVKVIFHPEFLSSTSPLLPVDYEEFVRGCHLGVFPSYYEPWGYTPAECTVMGIPSISTNLSGFGCFMEEHIADPSAYGIYILDRRFRSLDDSCSQLTSFLYSFCQQSRRQRIIQRNRTERLSDLLDWKYLGRYYMSARHMALSKAFPEHFTYEPNEADAAQGYRYPRPASVPPSPSLSRHSSPHQSEDEEDPRNGPLEEDGERYDEDEEAAKDRRNIRAPEWPRRASCTSSTSGSKRNSVDTATSSSLSTPSEPLSPTSSLGEERN</sequence>
<reference key="1">
    <citation type="submission" date="2004-11" db="EMBL/GenBank/DDBJ databases">
        <authorList>
            <consortium name="The German cDNA consortium"/>
        </authorList>
    </citation>
    <scope>NUCLEOTIDE SEQUENCE [LARGE SCALE MRNA]</scope>
    <source>
        <tissue>Kidney</tissue>
    </source>
</reference>
<protein>
    <recommendedName>
        <fullName>Glycogen [starch] synthase, muscle</fullName>
        <ecNumber evidence="3">2.4.1.11</ecNumber>
    </recommendedName>
    <alternativeName>
        <fullName evidence="3">Glycogen synthase 1</fullName>
    </alternativeName>
</protein>
<organism>
    <name type="scientific">Pongo abelii</name>
    <name type="common">Sumatran orangutan</name>
    <name type="synonym">Pongo pygmaeus abelii</name>
    <dbReference type="NCBI Taxonomy" id="9601"/>
    <lineage>
        <taxon>Eukaryota</taxon>
        <taxon>Metazoa</taxon>
        <taxon>Chordata</taxon>
        <taxon>Craniata</taxon>
        <taxon>Vertebrata</taxon>
        <taxon>Euteleostomi</taxon>
        <taxon>Mammalia</taxon>
        <taxon>Eutheria</taxon>
        <taxon>Euarchontoglires</taxon>
        <taxon>Primates</taxon>
        <taxon>Haplorrhini</taxon>
        <taxon>Catarrhini</taxon>
        <taxon>Hominidae</taxon>
        <taxon>Pongo</taxon>
    </lineage>
</organism>
<name>GYS1_PONAB</name>
<accession>Q5R9H0</accession>
<gene>
    <name type="primary">GYS1</name>
</gene>